<protein>
    <recommendedName>
        <fullName>Anti-H(O) lectin 3</fullName>
    </recommendedName>
    <alternativeName>
        <fullName>Anti-H(O) lectin III</fullName>
    </alternativeName>
    <alternativeName>
        <fullName>UEA-III</fullName>
    </alternativeName>
</protein>
<keyword id="KW-0106">Calcium</keyword>
<keyword id="KW-0903">Direct protein sequencing</keyword>
<keyword id="KW-0325">Glycoprotein</keyword>
<keyword id="KW-0430">Lectin</keyword>
<keyword id="KW-0464">Manganese</keyword>
<proteinExistence type="evidence at protein level"/>
<comment type="function">
    <text>Binds lactose or galactose.</text>
</comment>
<comment type="subunit">
    <text>Homodimer.</text>
</comment>
<comment type="PTM">
    <text>Highly glycosylated.</text>
</comment>
<comment type="similarity">
    <text evidence="1">Belongs to the leguminous lectin family.</text>
</comment>
<dbReference type="PIR" id="S13435">
    <property type="entry name" value="S13435"/>
</dbReference>
<dbReference type="SMR" id="P23032"/>
<dbReference type="GO" id="GO:0030246">
    <property type="term" value="F:carbohydrate binding"/>
    <property type="evidence" value="ECO:0007669"/>
    <property type="project" value="UniProtKB-KW"/>
</dbReference>
<dbReference type="InterPro" id="IPR013320">
    <property type="entry name" value="ConA-like_dom_sf"/>
</dbReference>
<dbReference type="SUPFAM" id="SSF49899">
    <property type="entry name" value="Concanavalin A-like lectins/glucanases"/>
    <property type="match status" value="1"/>
</dbReference>
<sequence>SSDYLSFKFDKFAPNQLNMYFQGDASVSTKGVLQL</sequence>
<organism>
    <name type="scientific">Ulex europaeus</name>
    <name type="common">Furze</name>
    <dbReference type="NCBI Taxonomy" id="3902"/>
    <lineage>
        <taxon>Eukaryota</taxon>
        <taxon>Viridiplantae</taxon>
        <taxon>Streptophyta</taxon>
        <taxon>Embryophyta</taxon>
        <taxon>Tracheophyta</taxon>
        <taxon>Spermatophyta</taxon>
        <taxon>Magnoliopsida</taxon>
        <taxon>eudicotyledons</taxon>
        <taxon>Gunneridae</taxon>
        <taxon>Pentapetalae</taxon>
        <taxon>rosids</taxon>
        <taxon>fabids</taxon>
        <taxon>Fabales</taxon>
        <taxon>Fabaceae</taxon>
        <taxon>Papilionoideae</taxon>
        <taxon>50 kb inversion clade</taxon>
        <taxon>genistoids sensu lato</taxon>
        <taxon>core genistoids</taxon>
        <taxon>Genisteae</taxon>
        <taxon>Ulex</taxon>
    </lineage>
</organism>
<accession>P23032</accession>
<reference key="1">
    <citation type="journal article" date="1991" name="Biol. Chem. Hoppe-Seyler">
        <title>Purification and characterization of a new type lactose-binding Ulex europaeus lectin by affinity chromatography.</title>
        <authorList>
            <person name="Konami Y."/>
            <person name="Yamamoto K."/>
            <person name="Osawa T."/>
        </authorList>
    </citation>
    <scope>PROTEIN SEQUENCE</scope>
    <source>
        <tissue>Seed</tissue>
    </source>
</reference>
<name>LEC3_ULEEU</name>
<feature type="chain" id="PRO_0000105113" description="Anti-H(O) lectin 3">
    <location>
        <begin position="1"/>
        <end position="35" status="greater than"/>
    </location>
</feature>
<feature type="non-terminal residue">
    <location>
        <position position="35"/>
    </location>
</feature>
<evidence type="ECO:0000305" key="1"/>